<comment type="function">
    <text evidence="1">Catalyzes the initial step of the lipid cycle reactions in the biosynthesis of the cell wall peptidoglycan: transfers peptidoglycan precursor phospho-MurNAc-pentapeptide from UDP-MurNAc-pentapeptide onto the lipid carrier undecaprenyl phosphate, yielding undecaprenyl-pyrophosphoryl-MurNAc-pentapeptide, known as lipid I.</text>
</comment>
<comment type="catalytic activity">
    <reaction evidence="1">
        <text>UDP-N-acetyl-alpha-D-muramoyl-L-alanyl-gamma-D-glutamyl-meso-2,6-diaminopimeloyl-D-alanyl-D-alanine + di-trans,octa-cis-undecaprenyl phosphate = di-trans,octa-cis-undecaprenyl diphospho-N-acetyl-alpha-D-muramoyl-L-alanyl-D-glutamyl-meso-2,6-diaminopimeloyl-D-alanyl-D-alanine + UMP</text>
        <dbReference type="Rhea" id="RHEA:28386"/>
        <dbReference type="ChEBI" id="CHEBI:57865"/>
        <dbReference type="ChEBI" id="CHEBI:60392"/>
        <dbReference type="ChEBI" id="CHEBI:61386"/>
        <dbReference type="ChEBI" id="CHEBI:61387"/>
        <dbReference type="EC" id="2.7.8.13"/>
    </reaction>
</comment>
<comment type="cofactor">
    <cofactor evidence="1">
        <name>Mg(2+)</name>
        <dbReference type="ChEBI" id="CHEBI:18420"/>
    </cofactor>
</comment>
<comment type="pathway">
    <text evidence="1">Cell wall biogenesis; peptidoglycan biosynthesis.</text>
</comment>
<comment type="subcellular location">
    <subcellularLocation>
        <location evidence="1">Cell inner membrane</location>
        <topology evidence="1">Multi-pass membrane protein</topology>
    </subcellularLocation>
</comment>
<comment type="similarity">
    <text evidence="1">Belongs to the glycosyltransferase 4 family. MraY subfamily.</text>
</comment>
<dbReference type="EC" id="2.7.8.13" evidence="1"/>
<dbReference type="EMBL" id="CP000305">
    <property type="protein sequence ID" value="ABG16750.1"/>
    <property type="molecule type" value="Genomic_DNA"/>
</dbReference>
<dbReference type="EMBL" id="ACNQ01000006">
    <property type="protein sequence ID" value="EEO78206.1"/>
    <property type="molecule type" value="Genomic_DNA"/>
</dbReference>
<dbReference type="RefSeq" id="WP_002210437.1">
    <property type="nucleotide sequence ID" value="NZ_ACNQ01000006.1"/>
</dbReference>
<dbReference type="SMR" id="Q1CMN0"/>
<dbReference type="GeneID" id="57974063"/>
<dbReference type="KEGG" id="ypn:YPN_0418"/>
<dbReference type="HOGENOM" id="CLU_023982_0_0_6"/>
<dbReference type="UniPathway" id="UPA00219"/>
<dbReference type="Proteomes" id="UP000008936">
    <property type="component" value="Chromosome"/>
</dbReference>
<dbReference type="GO" id="GO:0005886">
    <property type="term" value="C:plasma membrane"/>
    <property type="evidence" value="ECO:0007669"/>
    <property type="project" value="UniProtKB-SubCell"/>
</dbReference>
<dbReference type="GO" id="GO:0046872">
    <property type="term" value="F:metal ion binding"/>
    <property type="evidence" value="ECO:0007669"/>
    <property type="project" value="UniProtKB-KW"/>
</dbReference>
<dbReference type="GO" id="GO:0008963">
    <property type="term" value="F:phospho-N-acetylmuramoyl-pentapeptide-transferase activity"/>
    <property type="evidence" value="ECO:0007669"/>
    <property type="project" value="UniProtKB-UniRule"/>
</dbReference>
<dbReference type="GO" id="GO:0051992">
    <property type="term" value="F:UDP-N-acetylmuramoyl-L-alanyl-D-glutamyl-meso-2,6-diaminopimelyl-D-alanyl-D-alanine:undecaprenyl-phosphate transferase activity"/>
    <property type="evidence" value="ECO:0007669"/>
    <property type="project" value="RHEA"/>
</dbReference>
<dbReference type="GO" id="GO:0051301">
    <property type="term" value="P:cell division"/>
    <property type="evidence" value="ECO:0007669"/>
    <property type="project" value="UniProtKB-KW"/>
</dbReference>
<dbReference type="GO" id="GO:0071555">
    <property type="term" value="P:cell wall organization"/>
    <property type="evidence" value="ECO:0007669"/>
    <property type="project" value="UniProtKB-KW"/>
</dbReference>
<dbReference type="GO" id="GO:0009252">
    <property type="term" value="P:peptidoglycan biosynthetic process"/>
    <property type="evidence" value="ECO:0007669"/>
    <property type="project" value="UniProtKB-UniRule"/>
</dbReference>
<dbReference type="GO" id="GO:0008360">
    <property type="term" value="P:regulation of cell shape"/>
    <property type="evidence" value="ECO:0007669"/>
    <property type="project" value="UniProtKB-KW"/>
</dbReference>
<dbReference type="CDD" id="cd06852">
    <property type="entry name" value="GT_MraY"/>
    <property type="match status" value="1"/>
</dbReference>
<dbReference type="HAMAP" id="MF_00038">
    <property type="entry name" value="MraY"/>
    <property type="match status" value="1"/>
</dbReference>
<dbReference type="InterPro" id="IPR000715">
    <property type="entry name" value="Glycosyl_transferase_4"/>
</dbReference>
<dbReference type="InterPro" id="IPR003524">
    <property type="entry name" value="PNAcMuramoyl-5peptid_Trfase"/>
</dbReference>
<dbReference type="InterPro" id="IPR018480">
    <property type="entry name" value="PNAcMuramoyl-5peptid_Trfase_CS"/>
</dbReference>
<dbReference type="NCBIfam" id="TIGR00445">
    <property type="entry name" value="mraY"/>
    <property type="match status" value="1"/>
</dbReference>
<dbReference type="PANTHER" id="PTHR22926">
    <property type="entry name" value="PHOSPHO-N-ACETYLMURAMOYL-PENTAPEPTIDE-TRANSFERASE"/>
    <property type="match status" value="1"/>
</dbReference>
<dbReference type="PANTHER" id="PTHR22926:SF5">
    <property type="entry name" value="PHOSPHO-N-ACETYLMURAMOYL-PENTAPEPTIDE-TRANSFERASE HOMOLOG"/>
    <property type="match status" value="1"/>
</dbReference>
<dbReference type="Pfam" id="PF00953">
    <property type="entry name" value="Glycos_transf_4"/>
    <property type="match status" value="1"/>
</dbReference>
<dbReference type="Pfam" id="PF10555">
    <property type="entry name" value="MraY_sig1"/>
    <property type="match status" value="1"/>
</dbReference>
<dbReference type="PROSITE" id="PS01347">
    <property type="entry name" value="MRAY_1"/>
    <property type="match status" value="1"/>
</dbReference>
<dbReference type="PROSITE" id="PS01348">
    <property type="entry name" value="MRAY_2"/>
    <property type="match status" value="1"/>
</dbReference>
<accession>Q1CMN0</accession>
<accession>C4GNX4</accession>
<protein>
    <recommendedName>
        <fullName evidence="1">Phospho-N-acetylmuramoyl-pentapeptide-transferase</fullName>
        <ecNumber evidence="1">2.7.8.13</ecNumber>
    </recommendedName>
    <alternativeName>
        <fullName evidence="1">UDP-MurNAc-pentapeptide phosphotransferase</fullName>
    </alternativeName>
</protein>
<feature type="chain" id="PRO_1000003089" description="Phospho-N-acetylmuramoyl-pentapeptide-transferase">
    <location>
        <begin position="1"/>
        <end position="360"/>
    </location>
</feature>
<feature type="transmembrane region" description="Helical" evidence="1">
    <location>
        <begin position="27"/>
        <end position="47"/>
    </location>
</feature>
<feature type="transmembrane region" description="Helical" evidence="1">
    <location>
        <begin position="72"/>
        <end position="92"/>
    </location>
</feature>
<feature type="transmembrane region" description="Helical" evidence="1">
    <location>
        <begin position="94"/>
        <end position="114"/>
    </location>
</feature>
<feature type="transmembrane region" description="Helical" evidence="1">
    <location>
        <begin position="132"/>
        <end position="152"/>
    </location>
</feature>
<feature type="transmembrane region" description="Helical" evidence="1">
    <location>
        <begin position="168"/>
        <end position="188"/>
    </location>
</feature>
<feature type="transmembrane region" description="Helical" evidence="1">
    <location>
        <begin position="199"/>
        <end position="219"/>
    </location>
</feature>
<feature type="transmembrane region" description="Helical" evidence="1">
    <location>
        <begin position="236"/>
        <end position="256"/>
    </location>
</feature>
<feature type="transmembrane region" description="Helical" evidence="1">
    <location>
        <begin position="263"/>
        <end position="283"/>
    </location>
</feature>
<feature type="transmembrane region" description="Helical" evidence="1">
    <location>
        <begin position="288"/>
        <end position="308"/>
    </location>
</feature>
<feature type="transmembrane region" description="Helical" evidence="1">
    <location>
        <begin position="338"/>
        <end position="358"/>
    </location>
</feature>
<proteinExistence type="inferred from homology"/>
<keyword id="KW-0131">Cell cycle</keyword>
<keyword id="KW-0132">Cell division</keyword>
<keyword id="KW-0997">Cell inner membrane</keyword>
<keyword id="KW-1003">Cell membrane</keyword>
<keyword id="KW-0133">Cell shape</keyword>
<keyword id="KW-0961">Cell wall biogenesis/degradation</keyword>
<keyword id="KW-0460">Magnesium</keyword>
<keyword id="KW-0472">Membrane</keyword>
<keyword id="KW-0479">Metal-binding</keyword>
<keyword id="KW-0573">Peptidoglycan synthesis</keyword>
<keyword id="KW-0808">Transferase</keyword>
<keyword id="KW-0812">Transmembrane</keyword>
<keyword id="KW-1133">Transmembrane helix</keyword>
<evidence type="ECO:0000255" key="1">
    <source>
        <dbReference type="HAMAP-Rule" id="MF_00038"/>
    </source>
</evidence>
<sequence length="360" mass="40077">MLVWLAEYLVKFYSGFNVFSYLTFRAIVSLLTALFISLWMGPHLIAWLQKLQIGQVVRNDGPESHFSKRGTPTMGGLMILFSITISVLMWAYPSNPYVWCVLFILIGYGIVGFIDDYRKVVRKNTKGLIARWKYFWQSIIALAAAFTMYSIGKDTSATELVVPFFKDIMPQLGLLYVLLAYFVIVGTSNAVNLTDGLDGLAIMPTVFVAAGFALVAWATGNVNFAAYLHIPYLRHAGELVIVCTAIVGAGLGFLWFNTYPAQVFMGDVGSLALGGALGTIAVLLRQEFLLVIMGGVFVVETLSVILQVGSFKLRGQRIFRMAPIHHHYELKGWPEPRVIVRFWIISLMLVLIGLATLKVR</sequence>
<reference key="1">
    <citation type="journal article" date="2006" name="J. Bacteriol.">
        <title>Complete genome sequence of Yersinia pestis strains Antiqua and Nepal516: evidence of gene reduction in an emerging pathogen.</title>
        <authorList>
            <person name="Chain P.S.G."/>
            <person name="Hu P."/>
            <person name="Malfatti S.A."/>
            <person name="Radnedge L."/>
            <person name="Larimer F."/>
            <person name="Vergez L.M."/>
            <person name="Worsham P."/>
            <person name="Chu M.C."/>
            <person name="Andersen G.L."/>
        </authorList>
    </citation>
    <scope>NUCLEOTIDE SEQUENCE [LARGE SCALE GENOMIC DNA]</scope>
    <source>
        <strain>Nepal516</strain>
    </source>
</reference>
<reference key="2">
    <citation type="submission" date="2009-04" db="EMBL/GenBank/DDBJ databases">
        <title>Yersinia pestis Nepal516A whole genome shotgun sequencing project.</title>
        <authorList>
            <person name="Plunkett G. III"/>
            <person name="Anderson B.D."/>
            <person name="Baumler D.J."/>
            <person name="Burland V."/>
            <person name="Cabot E.L."/>
            <person name="Glasner J.D."/>
            <person name="Mau B."/>
            <person name="Neeno-Eckwall E."/>
            <person name="Perna N.T."/>
            <person name="Munk A.C."/>
            <person name="Tapia R."/>
            <person name="Green L.D."/>
            <person name="Rogers Y.C."/>
            <person name="Detter J.C."/>
            <person name="Bruce D.C."/>
            <person name="Brettin T.S."/>
        </authorList>
    </citation>
    <scope>NUCLEOTIDE SEQUENCE [LARGE SCALE GENOMIC DNA]</scope>
    <source>
        <strain>Nepal516</strain>
    </source>
</reference>
<organism>
    <name type="scientific">Yersinia pestis bv. Antiqua (strain Nepal516)</name>
    <dbReference type="NCBI Taxonomy" id="377628"/>
    <lineage>
        <taxon>Bacteria</taxon>
        <taxon>Pseudomonadati</taxon>
        <taxon>Pseudomonadota</taxon>
        <taxon>Gammaproteobacteria</taxon>
        <taxon>Enterobacterales</taxon>
        <taxon>Yersiniaceae</taxon>
        <taxon>Yersinia</taxon>
    </lineage>
</organism>
<name>MRAY_YERPN</name>
<gene>
    <name evidence="1" type="primary">mraY</name>
    <name type="ordered locus">YPN_0418</name>
    <name type="ORF">YP516_0432</name>
</gene>